<reference key="1">
    <citation type="journal article" date="2002" name="Nucleic Acids Res.">
        <title>Genome sequence of Shigella flexneri 2a: insights into pathogenicity through comparison with genomes of Escherichia coli K12 and O157.</title>
        <authorList>
            <person name="Jin Q."/>
            <person name="Yuan Z."/>
            <person name="Xu J."/>
            <person name="Wang Y."/>
            <person name="Shen Y."/>
            <person name="Lu W."/>
            <person name="Wang J."/>
            <person name="Liu H."/>
            <person name="Yang J."/>
            <person name="Yang F."/>
            <person name="Zhang X."/>
            <person name="Zhang J."/>
            <person name="Yang G."/>
            <person name="Wu H."/>
            <person name="Qu D."/>
            <person name="Dong J."/>
            <person name="Sun L."/>
            <person name="Xue Y."/>
            <person name="Zhao A."/>
            <person name="Gao Y."/>
            <person name="Zhu J."/>
            <person name="Kan B."/>
            <person name="Ding K."/>
            <person name="Chen S."/>
            <person name="Cheng H."/>
            <person name="Yao Z."/>
            <person name="He B."/>
            <person name="Chen R."/>
            <person name="Ma D."/>
            <person name="Qiang B."/>
            <person name="Wen Y."/>
            <person name="Hou Y."/>
            <person name="Yu J."/>
        </authorList>
    </citation>
    <scope>NUCLEOTIDE SEQUENCE [LARGE SCALE GENOMIC DNA]</scope>
    <source>
        <strain>301 / Serotype 2a</strain>
    </source>
</reference>
<reference key="2">
    <citation type="journal article" date="2003" name="Infect. Immun.">
        <title>Complete genome sequence and comparative genomics of Shigella flexneri serotype 2a strain 2457T.</title>
        <authorList>
            <person name="Wei J."/>
            <person name="Goldberg M.B."/>
            <person name="Burland V."/>
            <person name="Venkatesan M.M."/>
            <person name="Deng W."/>
            <person name="Fournier G."/>
            <person name="Mayhew G.F."/>
            <person name="Plunkett G. III"/>
            <person name="Rose D.J."/>
            <person name="Darling A."/>
            <person name="Mau B."/>
            <person name="Perna N.T."/>
            <person name="Payne S.M."/>
            <person name="Runyen-Janecky L.J."/>
            <person name="Zhou S."/>
            <person name="Schwartz D.C."/>
            <person name="Blattner F.R."/>
        </authorList>
    </citation>
    <scope>NUCLEOTIDE SEQUENCE [LARGE SCALE GENOMIC DNA]</scope>
    <source>
        <strain>ATCC 700930 / 2457T / Serotype 2a</strain>
    </source>
</reference>
<accession>P0AC18</accession>
<accession>P31055</accession>
<accession>P76659</accession>
<evidence type="ECO:0000250" key="1"/>
<evidence type="ECO:0000250" key="2">
    <source>
        <dbReference type="UniProtKB" id="P0AC16"/>
    </source>
</evidence>
<evidence type="ECO:0000305" key="3"/>
<keyword id="KW-0289">Folate biosynthesis</keyword>
<keyword id="KW-0413">Isomerase</keyword>
<keyword id="KW-0456">Lyase</keyword>
<keyword id="KW-1185">Reference proteome</keyword>
<protein>
    <recommendedName>
        <fullName>Dihydroneopterin aldolase</fullName>
        <shortName>DHNA</shortName>
        <ecNumber evidence="2">4.1.2.25</ecNumber>
    </recommendedName>
    <alternativeName>
        <fullName>7,8-dihydroneopterin 2'-epimerase</fullName>
    </alternativeName>
    <alternativeName>
        <fullName>7,8-dihydroneopterin aldolase</fullName>
    </alternativeName>
    <alternativeName>
        <fullName>7,8-dihydroneopterin epimerase</fullName>
        <ecNumber evidence="2">5.1.99.8</ecNumber>
    </alternativeName>
    <alternativeName>
        <fullName>Dihydroneopterin epimerase</fullName>
    </alternativeName>
</protein>
<sequence length="122" mass="13620">MDIVFIEQLSVITTIGVYDWEQTIEQKLVFDIEMAWDNRKAAKSDDVADCLSYADIAETVVSHVEGARFALVERVAEEVAELLLARFNSPWVRIKLSKPGAVARAANVGVIIERGNNLKENN</sequence>
<dbReference type="EC" id="4.1.2.25" evidence="2"/>
<dbReference type="EC" id="5.1.99.8" evidence="2"/>
<dbReference type="EMBL" id="AE005674">
    <property type="protein sequence ID" value="AAN44575.2"/>
    <property type="molecule type" value="Genomic_DNA"/>
</dbReference>
<dbReference type="EMBL" id="AE014073">
    <property type="protein sequence ID" value="AAP18387.1"/>
    <property type="molecule type" value="Genomic_DNA"/>
</dbReference>
<dbReference type="RefSeq" id="NP_708868.2">
    <property type="nucleotide sequence ID" value="NC_004337.2"/>
</dbReference>
<dbReference type="RefSeq" id="WP_001295541.1">
    <property type="nucleotide sequence ID" value="NZ_WPGW01000061.1"/>
</dbReference>
<dbReference type="SMR" id="P0AC18"/>
<dbReference type="STRING" id="198214.SF3099"/>
<dbReference type="PaxDb" id="198214-SF3099"/>
<dbReference type="GeneID" id="1026693"/>
<dbReference type="GeneID" id="75173180"/>
<dbReference type="KEGG" id="sfl:SF3099"/>
<dbReference type="KEGG" id="sfx:S3304"/>
<dbReference type="PATRIC" id="fig|198214.7.peg.3677"/>
<dbReference type="HOGENOM" id="CLU_112632_0_2_6"/>
<dbReference type="UniPathway" id="UPA00077">
    <property type="reaction ID" value="UER00154"/>
</dbReference>
<dbReference type="Proteomes" id="UP000001006">
    <property type="component" value="Chromosome"/>
</dbReference>
<dbReference type="Proteomes" id="UP000002673">
    <property type="component" value="Chromosome"/>
</dbReference>
<dbReference type="GO" id="GO:0005737">
    <property type="term" value="C:cytoplasm"/>
    <property type="evidence" value="ECO:0007669"/>
    <property type="project" value="TreeGrafter"/>
</dbReference>
<dbReference type="GO" id="GO:0004150">
    <property type="term" value="F:dihydroneopterin aldolase activity"/>
    <property type="evidence" value="ECO:0007669"/>
    <property type="project" value="UniProtKB-EC"/>
</dbReference>
<dbReference type="GO" id="GO:0016853">
    <property type="term" value="F:isomerase activity"/>
    <property type="evidence" value="ECO:0007669"/>
    <property type="project" value="UniProtKB-KW"/>
</dbReference>
<dbReference type="GO" id="GO:0046656">
    <property type="term" value="P:folic acid biosynthetic process"/>
    <property type="evidence" value="ECO:0007669"/>
    <property type="project" value="UniProtKB-KW"/>
</dbReference>
<dbReference type="GO" id="GO:0046654">
    <property type="term" value="P:tetrahydrofolate biosynthetic process"/>
    <property type="evidence" value="ECO:0007669"/>
    <property type="project" value="UniProtKB-UniPathway"/>
</dbReference>
<dbReference type="CDD" id="cd00534">
    <property type="entry name" value="DHNA_DHNTPE"/>
    <property type="match status" value="1"/>
</dbReference>
<dbReference type="FunFam" id="3.30.1130.10:FF:000002">
    <property type="entry name" value="7,8-dihydroneopterin aldolase"/>
    <property type="match status" value="1"/>
</dbReference>
<dbReference type="Gene3D" id="3.30.1130.10">
    <property type="match status" value="1"/>
</dbReference>
<dbReference type="InterPro" id="IPR006156">
    <property type="entry name" value="Dihydroneopterin_aldolase"/>
</dbReference>
<dbReference type="InterPro" id="IPR006157">
    <property type="entry name" value="FolB_dom"/>
</dbReference>
<dbReference type="InterPro" id="IPR043133">
    <property type="entry name" value="GTP-CH-I_C/QueF"/>
</dbReference>
<dbReference type="NCBIfam" id="TIGR00525">
    <property type="entry name" value="folB"/>
    <property type="match status" value="1"/>
</dbReference>
<dbReference type="NCBIfam" id="TIGR00526">
    <property type="entry name" value="folB_dom"/>
    <property type="match status" value="1"/>
</dbReference>
<dbReference type="NCBIfam" id="NF008614">
    <property type="entry name" value="PRK11593.1"/>
    <property type="match status" value="1"/>
</dbReference>
<dbReference type="PANTHER" id="PTHR42844">
    <property type="entry name" value="DIHYDRONEOPTERIN ALDOLASE 1-RELATED"/>
    <property type="match status" value="1"/>
</dbReference>
<dbReference type="PANTHER" id="PTHR42844:SF1">
    <property type="entry name" value="DIHYDRONEOPTERIN ALDOLASE 1-RELATED"/>
    <property type="match status" value="1"/>
</dbReference>
<dbReference type="Pfam" id="PF02152">
    <property type="entry name" value="FolB"/>
    <property type="match status" value="1"/>
</dbReference>
<dbReference type="SMART" id="SM00905">
    <property type="entry name" value="FolB"/>
    <property type="match status" value="1"/>
</dbReference>
<dbReference type="SUPFAM" id="SSF55620">
    <property type="entry name" value="Tetrahydrobiopterin biosynthesis enzymes-like"/>
    <property type="match status" value="1"/>
</dbReference>
<comment type="function">
    <text evidence="2">Catalyzes the conversion of 7,8-dihydroneopterin to 6-hydroxymethyl-7,8-dihydropterin. Can use L-threo-dihydroneopterin and D-erythro-dihydroneopterin as substrates for the formation of 6-hydroxymethyldihydropterin, but it can also catalyze the epimerization of carbon 2' of dihydroneopterin to dihydromonapterin at appreciable velocity.</text>
</comment>
<comment type="catalytic activity">
    <reaction evidence="2">
        <text>7,8-dihydroneopterin = 6-hydroxymethyl-7,8-dihydropterin + glycolaldehyde</text>
        <dbReference type="Rhea" id="RHEA:10540"/>
        <dbReference type="ChEBI" id="CHEBI:17001"/>
        <dbReference type="ChEBI" id="CHEBI:17071"/>
        <dbReference type="ChEBI" id="CHEBI:44841"/>
        <dbReference type="EC" id="4.1.2.25"/>
    </reaction>
</comment>
<comment type="catalytic activity">
    <reaction evidence="2">
        <text>7,8-dihydroneopterin = 7,8-dihydromonapterin</text>
        <dbReference type="Rhea" id="RHEA:45328"/>
        <dbReference type="ChEBI" id="CHEBI:17001"/>
        <dbReference type="ChEBI" id="CHEBI:71175"/>
        <dbReference type="EC" id="5.1.99.8"/>
    </reaction>
</comment>
<comment type="pathway">
    <text>Cofactor biosynthesis; tetrahydrofolate biosynthesis; 2-amino-4-hydroxy-6-hydroxymethyl-7,8-dihydropteridine diphosphate from 7,8-dihydroneopterin triphosphate: step 3/4.</text>
</comment>
<comment type="subunit">
    <text evidence="1">Homooctamer.</text>
</comment>
<comment type="similarity">
    <text evidence="3">Belongs to the DHNA family.</text>
</comment>
<proteinExistence type="inferred from homology"/>
<feature type="chain" id="PRO_0000168271" description="Dihydroneopterin aldolase">
    <location>
        <begin position="1"/>
        <end position="122"/>
    </location>
</feature>
<feature type="active site" description="Proton donor/acceptor" evidence="2">
    <location>
        <position position="98"/>
    </location>
</feature>
<feature type="binding site" evidence="2">
    <location>
        <position position="21"/>
    </location>
    <ligand>
        <name>substrate</name>
    </ligand>
</feature>
<feature type="binding site" evidence="2">
    <location>
        <position position="53"/>
    </location>
    <ligand>
        <name>substrate</name>
    </ligand>
</feature>
<feature type="binding site" evidence="2">
    <location>
        <begin position="72"/>
        <end position="73"/>
    </location>
    <ligand>
        <name>substrate</name>
    </ligand>
</feature>
<organism>
    <name type="scientific">Shigella flexneri</name>
    <dbReference type="NCBI Taxonomy" id="623"/>
    <lineage>
        <taxon>Bacteria</taxon>
        <taxon>Pseudomonadati</taxon>
        <taxon>Pseudomonadota</taxon>
        <taxon>Gammaproteobacteria</taxon>
        <taxon>Enterobacterales</taxon>
        <taxon>Enterobacteriaceae</taxon>
        <taxon>Shigella</taxon>
    </lineage>
</organism>
<name>FOLB_SHIFL</name>
<gene>
    <name type="primary">folB</name>
    <name type="ordered locus">SF3099</name>
    <name type="ordered locus">S3304</name>
</gene>